<sequence length="408" mass="45392">MVQINGSYLKLKAGYLFPEISRRVNDFSTANPKADLIRLGIGDVTEPLPKACCNAMQLAIEEMSTEAGFHGYGPEQGYSWLREAIAKFAYQARNCEITPEEIFVSDGSKCDSSNILDILGDNNRIAVTDPVYPVYVDSNVMVGRTGLAEKSGRYQGLSYIPMNAENGFEAEIPSEHFDLIYLCFPNNPTGSVATKEQLMRWVEYAKNHDALILFDAAYEAFIQDPELPHSIYEIDGARDCAIEFRSFSKNAGFTGTRCAFTVIPKCLRGRSPSNDEVDLWSLWNRRQSTKFNGVSYIVQRGAEAVYSPEGQSQVSDLISFYMDNAQIIRSQLSSIGLQVYGGQNAPYAWIKTPEGMDSWAFFDYLLQKANVVGTPGSGFGSSGEGYFRLSAFNSRNKVNEAMRRITSI</sequence>
<evidence type="ECO:0000255" key="1">
    <source>
        <dbReference type="HAMAP-Rule" id="MF_01642"/>
    </source>
</evidence>
<accession>A9BCJ1</accession>
<proteinExistence type="inferred from homology"/>
<dbReference type="EC" id="2.6.1.83" evidence="1"/>
<dbReference type="EMBL" id="CP000878">
    <property type="protein sequence ID" value="ABX09553.1"/>
    <property type="molecule type" value="Genomic_DNA"/>
</dbReference>
<dbReference type="RefSeq" id="WP_012196174.1">
    <property type="nucleotide sequence ID" value="NC_009976.1"/>
</dbReference>
<dbReference type="SMR" id="A9BCJ1"/>
<dbReference type="STRING" id="93059.P9211_16221"/>
<dbReference type="KEGG" id="pmj:P9211_16221"/>
<dbReference type="eggNOG" id="COG0436">
    <property type="taxonomic scope" value="Bacteria"/>
</dbReference>
<dbReference type="HOGENOM" id="CLU_051433_0_0_3"/>
<dbReference type="OrthoDB" id="9802328at2"/>
<dbReference type="UniPathway" id="UPA00034">
    <property type="reaction ID" value="UER00466"/>
</dbReference>
<dbReference type="Proteomes" id="UP000000788">
    <property type="component" value="Chromosome"/>
</dbReference>
<dbReference type="GO" id="GO:0010285">
    <property type="term" value="F:L,L-diaminopimelate aminotransferase activity"/>
    <property type="evidence" value="ECO:0007669"/>
    <property type="project" value="UniProtKB-UniRule"/>
</dbReference>
<dbReference type="GO" id="GO:0030170">
    <property type="term" value="F:pyridoxal phosphate binding"/>
    <property type="evidence" value="ECO:0007669"/>
    <property type="project" value="UniProtKB-UniRule"/>
</dbReference>
<dbReference type="GO" id="GO:0033362">
    <property type="term" value="P:lysine biosynthetic process via diaminopimelate, diaminopimelate-aminotransferase pathway"/>
    <property type="evidence" value="ECO:0007669"/>
    <property type="project" value="UniProtKB-UniRule"/>
</dbReference>
<dbReference type="CDD" id="cd00609">
    <property type="entry name" value="AAT_like"/>
    <property type="match status" value="1"/>
</dbReference>
<dbReference type="FunFam" id="3.40.640.10:FF:000099">
    <property type="entry name" value="LL-diaminopimelate aminotransferase, chloroplastic"/>
    <property type="match status" value="1"/>
</dbReference>
<dbReference type="Gene3D" id="3.90.1150.10">
    <property type="entry name" value="Aspartate Aminotransferase, domain 1"/>
    <property type="match status" value="1"/>
</dbReference>
<dbReference type="Gene3D" id="3.40.640.10">
    <property type="entry name" value="Type I PLP-dependent aspartate aminotransferase-like (Major domain)"/>
    <property type="match status" value="1"/>
</dbReference>
<dbReference type="HAMAP" id="MF_01642">
    <property type="entry name" value="DapL_aminotrans_1"/>
    <property type="match status" value="1"/>
</dbReference>
<dbReference type="InterPro" id="IPR004839">
    <property type="entry name" value="Aminotransferase_I/II_large"/>
</dbReference>
<dbReference type="InterPro" id="IPR019942">
    <property type="entry name" value="DapL/ALD1"/>
</dbReference>
<dbReference type="InterPro" id="IPR015424">
    <property type="entry name" value="PyrdxlP-dep_Trfase"/>
</dbReference>
<dbReference type="InterPro" id="IPR015421">
    <property type="entry name" value="PyrdxlP-dep_Trfase_major"/>
</dbReference>
<dbReference type="InterPro" id="IPR015422">
    <property type="entry name" value="PyrdxlP-dep_Trfase_small"/>
</dbReference>
<dbReference type="NCBIfam" id="TIGR03542">
    <property type="entry name" value="DAPAT_plant"/>
    <property type="match status" value="1"/>
</dbReference>
<dbReference type="PANTHER" id="PTHR43144">
    <property type="entry name" value="AMINOTRANSFERASE"/>
    <property type="match status" value="1"/>
</dbReference>
<dbReference type="Pfam" id="PF00155">
    <property type="entry name" value="Aminotran_1_2"/>
    <property type="match status" value="1"/>
</dbReference>
<dbReference type="SUPFAM" id="SSF53383">
    <property type="entry name" value="PLP-dependent transferases"/>
    <property type="match status" value="1"/>
</dbReference>
<gene>
    <name evidence="1" type="primary">dapL</name>
    <name type="ordered locus">P9211_16221</name>
</gene>
<feature type="chain" id="PRO_1000186873" description="LL-diaminopimelate aminotransferase">
    <location>
        <begin position="1"/>
        <end position="408"/>
    </location>
</feature>
<feature type="binding site" evidence="1">
    <location>
        <position position="15"/>
    </location>
    <ligand>
        <name>substrate</name>
    </ligand>
</feature>
<feature type="binding site" evidence="1">
    <location>
        <position position="42"/>
    </location>
    <ligand>
        <name>substrate</name>
    </ligand>
</feature>
<feature type="binding site" evidence="1">
    <location>
        <position position="72"/>
    </location>
    <ligand>
        <name>pyridoxal 5'-phosphate</name>
        <dbReference type="ChEBI" id="CHEBI:597326"/>
    </ligand>
</feature>
<feature type="binding site" evidence="1">
    <location>
        <begin position="108"/>
        <end position="109"/>
    </location>
    <ligand>
        <name>pyridoxal 5'-phosphate</name>
        <dbReference type="ChEBI" id="CHEBI:597326"/>
    </ligand>
</feature>
<feature type="binding site" evidence="1">
    <location>
        <position position="109"/>
    </location>
    <ligand>
        <name>substrate</name>
    </ligand>
</feature>
<feature type="binding site" evidence="1">
    <location>
        <position position="132"/>
    </location>
    <ligand>
        <name>pyridoxal 5'-phosphate</name>
        <dbReference type="ChEBI" id="CHEBI:597326"/>
    </ligand>
</feature>
<feature type="binding site" evidence="1">
    <location>
        <position position="132"/>
    </location>
    <ligand>
        <name>substrate</name>
    </ligand>
</feature>
<feature type="binding site" evidence="1">
    <location>
        <position position="187"/>
    </location>
    <ligand>
        <name>pyridoxal 5'-phosphate</name>
        <dbReference type="ChEBI" id="CHEBI:597326"/>
    </ligand>
</feature>
<feature type="binding site" evidence="1">
    <location>
        <position position="187"/>
    </location>
    <ligand>
        <name>substrate</name>
    </ligand>
</feature>
<feature type="binding site" evidence="1">
    <location>
        <position position="218"/>
    </location>
    <ligand>
        <name>pyridoxal 5'-phosphate</name>
        <dbReference type="ChEBI" id="CHEBI:597326"/>
    </ligand>
</feature>
<feature type="binding site" evidence="1">
    <location>
        <begin position="246"/>
        <end position="248"/>
    </location>
    <ligand>
        <name>pyridoxal 5'-phosphate</name>
        <dbReference type="ChEBI" id="CHEBI:597326"/>
    </ligand>
</feature>
<feature type="binding site" evidence="1">
    <location>
        <position position="257"/>
    </location>
    <ligand>
        <name>pyridoxal 5'-phosphate</name>
        <dbReference type="ChEBI" id="CHEBI:597326"/>
    </ligand>
</feature>
<feature type="binding site" evidence="1">
    <location>
        <position position="292"/>
    </location>
    <ligand>
        <name>pyridoxal 5'-phosphate</name>
        <dbReference type="ChEBI" id="CHEBI:597326"/>
    </ligand>
</feature>
<feature type="binding site" evidence="1">
    <location>
        <position position="292"/>
    </location>
    <ligand>
        <name>substrate</name>
    </ligand>
</feature>
<feature type="binding site" evidence="1">
    <location>
        <position position="388"/>
    </location>
    <ligand>
        <name>substrate</name>
    </ligand>
</feature>
<feature type="modified residue" description="N6-(pyridoxal phosphate)lysine" evidence="1">
    <location>
        <position position="249"/>
    </location>
</feature>
<comment type="function">
    <text evidence="1">Involved in the synthesis of meso-diaminopimelate (m-DAP or DL-DAP), required for both lysine and peptidoglycan biosynthesis. Catalyzes the direct conversion of tetrahydrodipicolinate to LL-diaminopimelate.</text>
</comment>
<comment type="catalytic activity">
    <reaction evidence="1">
        <text>(2S,6S)-2,6-diaminopimelate + 2-oxoglutarate = (S)-2,3,4,5-tetrahydrodipicolinate + L-glutamate + H2O + H(+)</text>
        <dbReference type="Rhea" id="RHEA:23988"/>
        <dbReference type="ChEBI" id="CHEBI:15377"/>
        <dbReference type="ChEBI" id="CHEBI:15378"/>
        <dbReference type="ChEBI" id="CHEBI:16810"/>
        <dbReference type="ChEBI" id="CHEBI:16845"/>
        <dbReference type="ChEBI" id="CHEBI:29985"/>
        <dbReference type="ChEBI" id="CHEBI:57609"/>
        <dbReference type="EC" id="2.6.1.83"/>
    </reaction>
</comment>
<comment type="cofactor">
    <cofactor evidence="1">
        <name>pyridoxal 5'-phosphate</name>
        <dbReference type="ChEBI" id="CHEBI:597326"/>
    </cofactor>
</comment>
<comment type="pathway">
    <text evidence="1">Amino-acid biosynthesis; L-lysine biosynthesis via DAP pathway; LL-2,6-diaminopimelate from (S)-tetrahydrodipicolinate (aminotransferase route): step 1/1.</text>
</comment>
<comment type="subunit">
    <text evidence="1">Homodimer.</text>
</comment>
<comment type="similarity">
    <text evidence="1">Belongs to the class-I pyridoxal-phosphate-dependent aminotransferase family. LL-diaminopimelate aminotransferase subfamily.</text>
</comment>
<keyword id="KW-0032">Aminotransferase</keyword>
<keyword id="KW-0663">Pyridoxal phosphate</keyword>
<keyword id="KW-1185">Reference proteome</keyword>
<keyword id="KW-0808">Transferase</keyword>
<protein>
    <recommendedName>
        <fullName evidence="1">LL-diaminopimelate aminotransferase</fullName>
        <shortName evidence="1">DAP-AT</shortName>
        <shortName evidence="1">DAP-aminotransferase</shortName>
        <shortName evidence="1">LL-DAP-aminotransferase</shortName>
        <ecNumber evidence="1">2.6.1.83</ecNumber>
    </recommendedName>
</protein>
<name>DAPAT_PROM4</name>
<reference key="1">
    <citation type="journal article" date="2007" name="PLoS Genet.">
        <title>Patterns and implications of gene gain and loss in the evolution of Prochlorococcus.</title>
        <authorList>
            <person name="Kettler G.C."/>
            <person name="Martiny A.C."/>
            <person name="Huang K."/>
            <person name="Zucker J."/>
            <person name="Coleman M.L."/>
            <person name="Rodrigue S."/>
            <person name="Chen F."/>
            <person name="Lapidus A."/>
            <person name="Ferriera S."/>
            <person name="Johnson J."/>
            <person name="Steglich C."/>
            <person name="Church G.M."/>
            <person name="Richardson P."/>
            <person name="Chisholm S.W."/>
        </authorList>
    </citation>
    <scope>NUCLEOTIDE SEQUENCE [LARGE SCALE GENOMIC DNA]</scope>
    <source>
        <strain>MIT 9211</strain>
    </source>
</reference>
<organism>
    <name type="scientific">Prochlorococcus marinus (strain MIT 9211)</name>
    <dbReference type="NCBI Taxonomy" id="93059"/>
    <lineage>
        <taxon>Bacteria</taxon>
        <taxon>Bacillati</taxon>
        <taxon>Cyanobacteriota</taxon>
        <taxon>Cyanophyceae</taxon>
        <taxon>Synechococcales</taxon>
        <taxon>Prochlorococcaceae</taxon>
        <taxon>Prochlorococcus</taxon>
    </lineage>
</organism>